<comment type="function">
    <text evidence="1">The glycine cleavage system catalyzes the degradation of glycine.</text>
</comment>
<comment type="catalytic activity">
    <reaction evidence="1">
        <text>N(6)-[(R)-S(8)-aminomethyldihydrolipoyl]-L-lysyl-[protein] + (6S)-5,6,7,8-tetrahydrofolate = N(6)-[(R)-dihydrolipoyl]-L-lysyl-[protein] + (6R)-5,10-methylene-5,6,7,8-tetrahydrofolate + NH4(+)</text>
        <dbReference type="Rhea" id="RHEA:16945"/>
        <dbReference type="Rhea" id="RHEA-COMP:10475"/>
        <dbReference type="Rhea" id="RHEA-COMP:10492"/>
        <dbReference type="ChEBI" id="CHEBI:15636"/>
        <dbReference type="ChEBI" id="CHEBI:28938"/>
        <dbReference type="ChEBI" id="CHEBI:57453"/>
        <dbReference type="ChEBI" id="CHEBI:83100"/>
        <dbReference type="ChEBI" id="CHEBI:83143"/>
        <dbReference type="EC" id="2.1.2.10"/>
    </reaction>
</comment>
<comment type="subunit">
    <text evidence="1">The glycine cleavage system is composed of four proteins: P, T, L and H.</text>
</comment>
<comment type="similarity">
    <text evidence="1">Belongs to the GcvT family.</text>
</comment>
<feature type="chain" id="PRO_1000047641" description="Aminomethyltransferase">
    <location>
        <begin position="1"/>
        <end position="365"/>
    </location>
</feature>
<reference key="1">
    <citation type="journal article" date="2006" name="J. Bacteriol.">
        <title>Genome sequence of Aeromonas hydrophila ATCC 7966T: jack of all trades.</title>
        <authorList>
            <person name="Seshadri R."/>
            <person name="Joseph S.W."/>
            <person name="Chopra A.K."/>
            <person name="Sha J."/>
            <person name="Shaw J."/>
            <person name="Graf J."/>
            <person name="Haft D.H."/>
            <person name="Wu M."/>
            <person name="Ren Q."/>
            <person name="Rosovitz M.J."/>
            <person name="Madupu R."/>
            <person name="Tallon L."/>
            <person name="Kim M."/>
            <person name="Jin S."/>
            <person name="Vuong H."/>
            <person name="Stine O.C."/>
            <person name="Ali A."/>
            <person name="Horneman A.J."/>
            <person name="Heidelberg J.F."/>
        </authorList>
    </citation>
    <scope>NUCLEOTIDE SEQUENCE [LARGE SCALE GENOMIC DNA]</scope>
    <source>
        <strain>ATCC 7966 / DSM 30187 / BCRC 13018 / CCUG 14551 / JCM 1027 / KCTC 2358 / NCIMB 9240 / NCTC 8049</strain>
    </source>
</reference>
<dbReference type="EC" id="2.1.2.10" evidence="1"/>
<dbReference type="EMBL" id="CP000462">
    <property type="protein sequence ID" value="ABK37780.1"/>
    <property type="molecule type" value="Genomic_DNA"/>
</dbReference>
<dbReference type="RefSeq" id="WP_011705608.1">
    <property type="nucleotide sequence ID" value="NC_008570.1"/>
</dbReference>
<dbReference type="RefSeq" id="YP_856254.1">
    <property type="nucleotide sequence ID" value="NC_008570.1"/>
</dbReference>
<dbReference type="SMR" id="A0KJ03"/>
<dbReference type="STRING" id="380703.AHA_1718"/>
<dbReference type="EnsemblBacteria" id="ABK37780">
    <property type="protein sequence ID" value="ABK37780"/>
    <property type="gene ID" value="AHA_1718"/>
</dbReference>
<dbReference type="GeneID" id="4488170"/>
<dbReference type="KEGG" id="aha:AHA_1718"/>
<dbReference type="PATRIC" id="fig|380703.7.peg.1733"/>
<dbReference type="eggNOG" id="COG0404">
    <property type="taxonomic scope" value="Bacteria"/>
</dbReference>
<dbReference type="HOGENOM" id="CLU_007884_10_2_6"/>
<dbReference type="OrthoDB" id="9774591at2"/>
<dbReference type="Proteomes" id="UP000000756">
    <property type="component" value="Chromosome"/>
</dbReference>
<dbReference type="GO" id="GO:0005829">
    <property type="term" value="C:cytosol"/>
    <property type="evidence" value="ECO:0007669"/>
    <property type="project" value="TreeGrafter"/>
</dbReference>
<dbReference type="GO" id="GO:0005960">
    <property type="term" value="C:glycine cleavage complex"/>
    <property type="evidence" value="ECO:0007669"/>
    <property type="project" value="InterPro"/>
</dbReference>
<dbReference type="GO" id="GO:0004047">
    <property type="term" value="F:aminomethyltransferase activity"/>
    <property type="evidence" value="ECO:0007669"/>
    <property type="project" value="UniProtKB-UniRule"/>
</dbReference>
<dbReference type="GO" id="GO:0008483">
    <property type="term" value="F:transaminase activity"/>
    <property type="evidence" value="ECO:0007669"/>
    <property type="project" value="UniProtKB-KW"/>
</dbReference>
<dbReference type="GO" id="GO:0019464">
    <property type="term" value="P:glycine decarboxylation via glycine cleavage system"/>
    <property type="evidence" value="ECO:0007669"/>
    <property type="project" value="UniProtKB-UniRule"/>
</dbReference>
<dbReference type="FunFam" id="2.40.30.110:FF:000001">
    <property type="entry name" value="Aminomethyltransferase"/>
    <property type="match status" value="1"/>
</dbReference>
<dbReference type="FunFam" id="3.30.70.1400:FF:000001">
    <property type="entry name" value="Aminomethyltransferase"/>
    <property type="match status" value="1"/>
</dbReference>
<dbReference type="FunFam" id="4.10.1250.10:FF:000001">
    <property type="entry name" value="Aminomethyltransferase"/>
    <property type="match status" value="1"/>
</dbReference>
<dbReference type="Gene3D" id="2.40.30.110">
    <property type="entry name" value="Aminomethyltransferase beta-barrel domains"/>
    <property type="match status" value="1"/>
</dbReference>
<dbReference type="Gene3D" id="3.30.70.1400">
    <property type="entry name" value="Aminomethyltransferase beta-barrel domains"/>
    <property type="match status" value="1"/>
</dbReference>
<dbReference type="Gene3D" id="4.10.1250.10">
    <property type="entry name" value="Aminomethyltransferase fragment"/>
    <property type="match status" value="1"/>
</dbReference>
<dbReference type="Gene3D" id="3.30.1360.120">
    <property type="entry name" value="Probable tRNA modification gtpase trme, domain 1"/>
    <property type="match status" value="1"/>
</dbReference>
<dbReference type="HAMAP" id="MF_00259">
    <property type="entry name" value="GcvT"/>
    <property type="match status" value="1"/>
</dbReference>
<dbReference type="InterPro" id="IPR006223">
    <property type="entry name" value="GCS_T"/>
</dbReference>
<dbReference type="InterPro" id="IPR022903">
    <property type="entry name" value="GCS_T_bac"/>
</dbReference>
<dbReference type="InterPro" id="IPR013977">
    <property type="entry name" value="GCST_C"/>
</dbReference>
<dbReference type="InterPro" id="IPR006222">
    <property type="entry name" value="GCV_T_N"/>
</dbReference>
<dbReference type="InterPro" id="IPR028896">
    <property type="entry name" value="GcvT/YgfZ/DmdA"/>
</dbReference>
<dbReference type="InterPro" id="IPR029043">
    <property type="entry name" value="GcvT/YgfZ_C"/>
</dbReference>
<dbReference type="InterPro" id="IPR027266">
    <property type="entry name" value="TrmE/GcvT_dom1"/>
</dbReference>
<dbReference type="NCBIfam" id="TIGR00528">
    <property type="entry name" value="gcvT"/>
    <property type="match status" value="1"/>
</dbReference>
<dbReference type="NCBIfam" id="NF001567">
    <property type="entry name" value="PRK00389.1"/>
    <property type="match status" value="1"/>
</dbReference>
<dbReference type="PANTHER" id="PTHR43757">
    <property type="entry name" value="AMINOMETHYLTRANSFERASE"/>
    <property type="match status" value="1"/>
</dbReference>
<dbReference type="PANTHER" id="PTHR43757:SF2">
    <property type="entry name" value="AMINOMETHYLTRANSFERASE, MITOCHONDRIAL"/>
    <property type="match status" value="1"/>
</dbReference>
<dbReference type="Pfam" id="PF01571">
    <property type="entry name" value="GCV_T"/>
    <property type="match status" value="1"/>
</dbReference>
<dbReference type="Pfam" id="PF08669">
    <property type="entry name" value="GCV_T_C"/>
    <property type="match status" value="1"/>
</dbReference>
<dbReference type="PIRSF" id="PIRSF006487">
    <property type="entry name" value="GcvT"/>
    <property type="match status" value="1"/>
</dbReference>
<dbReference type="SUPFAM" id="SSF101790">
    <property type="entry name" value="Aminomethyltransferase beta-barrel domain"/>
    <property type="match status" value="1"/>
</dbReference>
<dbReference type="SUPFAM" id="SSF103025">
    <property type="entry name" value="Folate-binding domain"/>
    <property type="match status" value="1"/>
</dbReference>
<sequence length="365" mass="39715">MIQTTVLHPKHLEAGAKMVDFHGWEMPINYGSQLEEHHQVRTDAGMFDVSHMTIVDLTGERVKAFLQHLLANDVAKLTVFGKALYSGMLTPEGGVIDDLITYYLGETFYRLVVNSATREKDLAWIRHHAQDFGVTVTERPELAMIAVQGSNAKAKAAKVFSAEQNAAVEGMKPFFGVQAGELFIATTGYTGEDGYEIVVPQEQACDLWQALLDNGVAPCGLGARDTLRLEAGMNLYGQDMDETVSPLAANMAWTIAWEPSDRQFIGRAALEAQKAAGSQPKLVGLVMEEKGVLRSGMPVTFTTAAGEEREGVITSGSFSPTLGYSIALARVPRDIGEQASVEIRKKLVTVKVTKPAFVRNGQKLV</sequence>
<evidence type="ECO:0000255" key="1">
    <source>
        <dbReference type="HAMAP-Rule" id="MF_00259"/>
    </source>
</evidence>
<proteinExistence type="inferred from homology"/>
<gene>
    <name evidence="1" type="primary">gcvT</name>
    <name type="ordered locus">AHA_1718</name>
</gene>
<organism>
    <name type="scientific">Aeromonas hydrophila subsp. hydrophila (strain ATCC 7966 / DSM 30187 / BCRC 13018 / CCUG 14551 / JCM 1027 / KCTC 2358 / NCIMB 9240 / NCTC 8049)</name>
    <dbReference type="NCBI Taxonomy" id="380703"/>
    <lineage>
        <taxon>Bacteria</taxon>
        <taxon>Pseudomonadati</taxon>
        <taxon>Pseudomonadota</taxon>
        <taxon>Gammaproteobacteria</taxon>
        <taxon>Aeromonadales</taxon>
        <taxon>Aeromonadaceae</taxon>
        <taxon>Aeromonas</taxon>
    </lineage>
</organism>
<protein>
    <recommendedName>
        <fullName evidence="1">Aminomethyltransferase</fullName>
        <ecNumber evidence="1">2.1.2.10</ecNumber>
    </recommendedName>
    <alternativeName>
        <fullName evidence="1">Glycine cleavage system T protein</fullName>
    </alternativeName>
</protein>
<name>GCST_AERHH</name>
<accession>A0KJ03</accession>
<keyword id="KW-0032">Aminotransferase</keyword>
<keyword id="KW-1185">Reference proteome</keyword>
<keyword id="KW-0808">Transferase</keyword>